<protein>
    <recommendedName>
        <fullName evidence="8">Peroxisomal multifunctional enzyme type 2</fullName>
        <shortName>MFE-2</shortName>
    </recommendedName>
    <alternativeName>
        <fullName>17-beta-hydroxysteroid dehydrogenase 4</fullName>
        <shortName>17-beta-HSD 4</shortName>
    </alternativeName>
    <alternativeName>
        <fullName>D-bifunctional protein</fullName>
        <shortName>DBP</shortName>
    </alternativeName>
    <alternativeName>
        <fullName>Multifunctional protein 2</fullName>
        <shortName evidence="7">MFP-2</shortName>
    </alternativeName>
    <component>
        <recommendedName>
            <fullName>(3R)-hydroxyacyl-CoA dehydrogenase</fullName>
            <ecNumber evidence="2">1.1.1.n12</ecNumber>
        </recommendedName>
    </component>
    <component>
        <recommendedName>
            <fullName>Enoyl-CoA hydratase 2</fullName>
            <ecNumber evidence="6">4.2.1.107</ecNumber>
            <ecNumber evidence="2">4.2.1.119</ecNumber>
        </recommendedName>
        <alternativeName>
            <fullName>3-alpha,7-alpha,12-alpha-trihydroxy-5-beta-cholest-24-enoyl-CoA hydratase</fullName>
        </alternativeName>
    </component>
</protein>
<proteinExistence type="evidence at protein level"/>
<sequence length="735" mass="79482">MASPLRFDGRVVLVTGAGGGLGRAYALAFAERGALVIVNDLGGDFKGIGKGSSAADKVVAEIRRKGGKAVANYDSVEAGEKLVKTALDTFGRIDVVVNNAGILRDRSFSRISDEDWDIIHRVHLRGSFQVTRAAWDHMKKQNYGRILMTSSASGIYGNFGQANYSAAKLGILGLCNTLAIEGRKNNIHCNTIAPNAGSRMTETVLPEDLVEALKPEYVAPLVLWLCHESCEENGGLFEVGAGWIGKLRWERTLGAIVRKRNQPMTPEAVRDNWEKICDFSNASKPQTIQESTGGIVEVLHKVDSEGISPNRTSHAAPAATSGFVGAVGHKLPSFSSSYTELQSIMYALGVGASVKNPKDLKFVYEGSADFSCLPTFGVIVAQKSMMNGGLAEVPGLSFNFAKALHGEQYLELYKPLPRSGELKCEAVIADILDKGSGVVIVMDVYSYSGKELICYNQFSVFVVGSGGFGGKRTSEKLKAAVAVPNRPPDAVLRDATSLNQAALYRLSGDWNPLHIDPDFASVAGFEKPILHGLCTFGFSARHVLQQFADNDVSRFKAIKVRFAKPVYPGQTLQTEMWKEGNRIHFQTKVHETGDVVISNAYVDLVPASGVSTQTPSEGGELQSALVFGEIGRRLKSVGREVVKKANAVFEWHITKGGTVAAKWTIDLKSGSGEVYQGPAKGSADVTIIISDEDFMEVVFGKLDPQKAFFSGRLKARGNIMLSQKLQMILKDYAKL</sequence>
<comment type="function">
    <text evidence="2 6">Bifunctional enzyme acting on the peroxisomal fatty acid beta-oxidation pathway (PubMed:17442273). Catalyzes two of the four reactions in fatty acid degradation: hydration of 2-enoyl-CoA (trans-2-enoyl-CoA) to produce (3R)-3-hydroxyacyl-CoA, and dehydrogenation of (3R)-3-hydroxyacyl-CoA to produce 3-ketoacyl-CoA (3-oxoacyl-CoA), which is further metabolized by SCPx. Can use straight-chain and branched-chain fatty acids, as well as bile acid intermediates as substrates (By similarity) (PubMed:17442273).</text>
</comment>
<comment type="catalytic activity">
    <reaction evidence="2">
        <text>a (3R)-3-hydroxyacyl-CoA + NAD(+) = a 3-oxoacyl-CoA + NADH + H(+)</text>
        <dbReference type="Rhea" id="RHEA:32711"/>
        <dbReference type="ChEBI" id="CHEBI:15378"/>
        <dbReference type="ChEBI" id="CHEBI:57319"/>
        <dbReference type="ChEBI" id="CHEBI:57540"/>
        <dbReference type="ChEBI" id="CHEBI:57945"/>
        <dbReference type="ChEBI" id="CHEBI:90726"/>
        <dbReference type="EC" id="1.1.1.n12"/>
    </reaction>
    <physiologicalReaction direction="left-to-right" evidence="2">
        <dbReference type="Rhea" id="RHEA:32712"/>
    </physiologicalReaction>
</comment>
<comment type="catalytic activity">
    <reaction evidence="6">
        <text>(24R,25R)-3alpha,7alpha,12alpha,24-tetrahydroxy-5beta-cholestan-26-oyl-CoA = (24E)-3alpha,7alpha,12alpha-trihydroxy-5beta-cholest-24-en-26-oyl-CoA + H2O</text>
        <dbReference type="Rhea" id="RHEA:18933"/>
        <dbReference type="ChEBI" id="CHEBI:15377"/>
        <dbReference type="ChEBI" id="CHEBI:59807"/>
        <dbReference type="ChEBI" id="CHEBI:59879"/>
        <dbReference type="EC" id="4.2.1.107"/>
    </reaction>
    <physiologicalReaction direction="right-to-left" evidence="6">
        <dbReference type="Rhea" id="RHEA:18935"/>
    </physiologicalReaction>
</comment>
<comment type="catalytic activity">
    <reaction evidence="2">
        <text>a (3R)-3-hydroxyacyl-CoA = a (2E)-enoyl-CoA + H2O</text>
        <dbReference type="Rhea" id="RHEA:26526"/>
        <dbReference type="ChEBI" id="CHEBI:15377"/>
        <dbReference type="ChEBI" id="CHEBI:57319"/>
        <dbReference type="ChEBI" id="CHEBI:58856"/>
        <dbReference type="EC" id="4.2.1.119"/>
    </reaction>
    <physiologicalReaction direction="right-to-left" evidence="2">
        <dbReference type="Rhea" id="RHEA:26528"/>
    </physiologicalReaction>
</comment>
<comment type="catalytic activity">
    <reaction evidence="2">
        <text>(2E)-octenoyl-CoA + H2O = (3R)-hydroxyoctanoyl-CoA</text>
        <dbReference type="Rhea" id="RHEA:40187"/>
        <dbReference type="ChEBI" id="CHEBI:15377"/>
        <dbReference type="ChEBI" id="CHEBI:62242"/>
        <dbReference type="ChEBI" id="CHEBI:74279"/>
    </reaction>
    <physiologicalReaction direction="left-to-right" evidence="2">
        <dbReference type="Rhea" id="RHEA:40188"/>
    </physiologicalReaction>
</comment>
<comment type="catalytic activity">
    <reaction evidence="2">
        <text>(3R)-hydroxyoctanoyl-CoA + NAD(+) = 3-oxooctanoyl-CoA + NADH + H(+)</text>
        <dbReference type="Rhea" id="RHEA:40191"/>
        <dbReference type="ChEBI" id="CHEBI:15378"/>
        <dbReference type="ChEBI" id="CHEBI:57540"/>
        <dbReference type="ChEBI" id="CHEBI:57945"/>
        <dbReference type="ChEBI" id="CHEBI:62619"/>
        <dbReference type="ChEBI" id="CHEBI:74279"/>
    </reaction>
    <physiologicalReaction direction="left-to-right" evidence="2">
        <dbReference type="Rhea" id="RHEA:40192"/>
    </physiologicalReaction>
</comment>
<comment type="catalytic activity">
    <reaction evidence="2">
        <text>(3R)-hydroxyhexadecanoyl-CoA + NAD(+) = 3-oxohexadecanoyl-CoA + NADH + H(+)</text>
        <dbReference type="Rhea" id="RHEA:40243"/>
        <dbReference type="ChEBI" id="CHEBI:15378"/>
        <dbReference type="ChEBI" id="CHEBI:57349"/>
        <dbReference type="ChEBI" id="CHEBI:57540"/>
        <dbReference type="ChEBI" id="CHEBI:57945"/>
        <dbReference type="ChEBI" id="CHEBI:74278"/>
    </reaction>
    <physiologicalReaction direction="left-to-right" evidence="2">
        <dbReference type="Rhea" id="RHEA:40244"/>
    </physiologicalReaction>
</comment>
<comment type="catalytic activity">
    <reaction evidence="2">
        <text>(2E)-hexadecenedioyl-CoA + H2O = (3R)-hydroxyhexadecanedioyl-CoA</text>
        <dbReference type="Rhea" id="RHEA:40255"/>
        <dbReference type="ChEBI" id="CHEBI:15377"/>
        <dbReference type="ChEBI" id="CHEBI:77075"/>
        <dbReference type="ChEBI" id="CHEBI:77079"/>
    </reaction>
    <physiologicalReaction direction="left-to-right" evidence="2">
        <dbReference type="Rhea" id="RHEA:40256"/>
    </physiologicalReaction>
</comment>
<comment type="catalytic activity">
    <reaction evidence="2">
        <text>(3R)-hydroxyhexadecanedioyl-CoA + NAD(+) = 3-oxohexadecanedioyl-CoA + NADH + H(+)</text>
        <dbReference type="Rhea" id="RHEA:40263"/>
        <dbReference type="ChEBI" id="CHEBI:15378"/>
        <dbReference type="ChEBI" id="CHEBI:57540"/>
        <dbReference type="ChEBI" id="CHEBI:57945"/>
        <dbReference type="ChEBI" id="CHEBI:77079"/>
        <dbReference type="ChEBI" id="CHEBI:77081"/>
    </reaction>
    <physiologicalReaction direction="left-to-right" evidence="2">
        <dbReference type="Rhea" id="RHEA:40264"/>
    </physiologicalReaction>
</comment>
<comment type="catalytic activity">
    <reaction evidence="2">
        <text>(3R)-hydroxyhexadecanoyl-CoA = (2E)-hexadecenoyl-CoA + H2O</text>
        <dbReference type="Rhea" id="RHEA:39159"/>
        <dbReference type="ChEBI" id="CHEBI:15377"/>
        <dbReference type="ChEBI" id="CHEBI:61526"/>
        <dbReference type="ChEBI" id="CHEBI:74278"/>
    </reaction>
    <physiologicalReaction direction="right-to-left" evidence="2">
        <dbReference type="Rhea" id="RHEA:39161"/>
    </physiologicalReaction>
</comment>
<comment type="catalytic activity">
    <reaction evidence="2">
        <text>(3R)-3-hydroxydecanoyl-CoA = (2E)-decenoyl-CoA + H2O</text>
        <dbReference type="Rhea" id="RHEA:45992"/>
        <dbReference type="ChEBI" id="CHEBI:15377"/>
        <dbReference type="ChEBI" id="CHEBI:61406"/>
        <dbReference type="ChEBI" id="CHEBI:74272"/>
    </reaction>
    <physiologicalReaction direction="right-to-left" evidence="2">
        <dbReference type="Rhea" id="RHEA:45994"/>
    </physiologicalReaction>
</comment>
<comment type="catalytic activity">
    <reaction evidence="2">
        <text>(3R)-3-hydroxydecanoyl-CoA + NAD(+) = 3-oxodecanoyl-CoA + NADH + H(+)</text>
        <dbReference type="Rhea" id="RHEA:45832"/>
        <dbReference type="ChEBI" id="CHEBI:15378"/>
        <dbReference type="ChEBI" id="CHEBI:57540"/>
        <dbReference type="ChEBI" id="CHEBI:57945"/>
        <dbReference type="ChEBI" id="CHEBI:62548"/>
        <dbReference type="ChEBI" id="CHEBI:74272"/>
    </reaction>
    <physiologicalReaction direction="left-to-right" evidence="2">
        <dbReference type="Rhea" id="RHEA:45833"/>
    </physiologicalReaction>
</comment>
<comment type="catalytic activity">
    <reaction evidence="2">
        <text>(24R,25R)-3alpha,7alpha,12alpha,24-tetrahydroxy-5beta-cholestan-26-oyl-CoA + NAD(+) = 3alpha,7alpha,12alpha-trihydroxy-24-oxo-5beta-cholestan-26-oyl-CoA + NADH + H(+)</text>
        <dbReference type="Rhea" id="RHEA:47088"/>
        <dbReference type="ChEBI" id="CHEBI:15378"/>
        <dbReference type="ChEBI" id="CHEBI:57540"/>
        <dbReference type="ChEBI" id="CHEBI:57945"/>
        <dbReference type="ChEBI" id="CHEBI:58507"/>
        <dbReference type="ChEBI" id="CHEBI:59807"/>
    </reaction>
    <physiologicalReaction direction="left-to-right" evidence="2">
        <dbReference type="Rhea" id="RHEA:47089"/>
    </physiologicalReaction>
</comment>
<comment type="pathway">
    <text evidence="6">Lipid metabolism; fatty acid beta-oxidation.</text>
</comment>
<comment type="subunit">
    <text evidence="2">Homodimer.</text>
</comment>
<comment type="interaction">
    <interactant intactId="EBI-8328056">
        <id>P51660</id>
    </interactant>
    <interactant intactId="EBI-466029">
        <id>P42858</id>
        <label>HTT</label>
    </interactant>
    <organismsDiffer>true</organismsDiffer>
    <experiments>15</experiments>
</comment>
<comment type="subcellular location">
    <subcellularLocation>
        <location evidence="3">Peroxisome</location>
    </subcellularLocation>
</comment>
<comment type="tissue specificity">
    <text>Present in many tissues with highest concentrations in liver and kidney.</text>
</comment>
<comment type="miscellaneous">
    <text evidence="1">The protein is found both as a full-length peptide and in a cleaved version.</text>
</comment>
<comment type="similarity">
    <text evidence="8">Belongs to the short-chain dehydrogenases/reductases (SDR) family.</text>
</comment>
<evidence type="ECO:0000250" key="1"/>
<evidence type="ECO:0000250" key="2">
    <source>
        <dbReference type="UniProtKB" id="P51659"/>
    </source>
</evidence>
<evidence type="ECO:0000250" key="3">
    <source>
        <dbReference type="UniProtKB" id="P97852"/>
    </source>
</evidence>
<evidence type="ECO:0000255" key="4"/>
<evidence type="ECO:0000255" key="5">
    <source>
        <dbReference type="PROSITE-ProRule" id="PRU10001"/>
    </source>
</evidence>
<evidence type="ECO:0000269" key="6">
    <source>
    </source>
</evidence>
<evidence type="ECO:0000303" key="7">
    <source>
    </source>
</evidence>
<evidence type="ECO:0000305" key="8"/>
<evidence type="ECO:0000312" key="9">
    <source>
        <dbReference type="MGI" id="MGI:105089"/>
    </source>
</evidence>
<evidence type="ECO:0007744" key="10">
    <source>
    </source>
</evidence>
<evidence type="ECO:0007744" key="11">
    <source>
    </source>
</evidence>
<evidence type="ECO:0007744" key="12">
    <source>
    </source>
</evidence>
<dbReference type="EC" id="1.1.1.n12" evidence="2"/>
<dbReference type="EC" id="4.2.1.107" evidence="6"/>
<dbReference type="EC" id="4.2.1.119" evidence="2"/>
<dbReference type="EMBL" id="X89998">
    <property type="protein sequence ID" value="CAA62015.1"/>
    <property type="molecule type" value="mRNA"/>
</dbReference>
<dbReference type="EMBL" id="AK004866">
    <property type="protein sequence ID" value="BAB23627.1"/>
    <property type="molecule type" value="mRNA"/>
</dbReference>
<dbReference type="EMBL" id="AK088381">
    <property type="protein sequence ID" value="BAC40317.1"/>
    <property type="molecule type" value="mRNA"/>
</dbReference>
<dbReference type="EMBL" id="AK166801">
    <property type="protein sequence ID" value="BAE39029.1"/>
    <property type="molecule type" value="mRNA"/>
</dbReference>
<dbReference type="EMBL" id="AK167060">
    <property type="protein sequence ID" value="BAE39222.1"/>
    <property type="molecule type" value="mRNA"/>
</dbReference>
<dbReference type="EMBL" id="AK169077">
    <property type="protein sequence ID" value="BAE40862.1"/>
    <property type="molecule type" value="mRNA"/>
</dbReference>
<dbReference type="EMBL" id="BC022175">
    <property type="protein sequence ID" value="AAH22175.1"/>
    <property type="molecule type" value="mRNA"/>
</dbReference>
<dbReference type="CCDS" id="CCDS29242.1"/>
<dbReference type="RefSeq" id="NP_032318.2">
    <property type="nucleotide sequence ID" value="NM_008292.4"/>
</dbReference>
<dbReference type="SMR" id="P51660"/>
<dbReference type="BioGRID" id="200435">
    <property type="interactions" value="28"/>
</dbReference>
<dbReference type="FunCoup" id="P51660">
    <property type="interactions" value="1622"/>
</dbReference>
<dbReference type="IntAct" id="P51660">
    <property type="interactions" value="2"/>
</dbReference>
<dbReference type="MINT" id="P51660"/>
<dbReference type="STRING" id="10090.ENSMUSP00000025385"/>
<dbReference type="ChEMBL" id="CHEMBL3621031"/>
<dbReference type="GlyGen" id="P51660">
    <property type="glycosylation" value="3 sites, 2 N-linked glycans (2 sites), 1 O-linked glycan (1 site)"/>
</dbReference>
<dbReference type="iPTMnet" id="P51660"/>
<dbReference type="PhosphoSitePlus" id="P51660"/>
<dbReference type="SwissPalm" id="P51660"/>
<dbReference type="jPOST" id="P51660"/>
<dbReference type="PaxDb" id="10090-ENSMUSP00000025385"/>
<dbReference type="PeptideAtlas" id="P51660"/>
<dbReference type="ProteomicsDB" id="279527"/>
<dbReference type="Pumba" id="P51660"/>
<dbReference type="Antibodypedia" id="13742">
    <property type="antibodies" value="421 antibodies from 34 providers"/>
</dbReference>
<dbReference type="DNASU" id="15488"/>
<dbReference type="Ensembl" id="ENSMUST00000025385.7">
    <property type="protein sequence ID" value="ENSMUSP00000025385.7"/>
    <property type="gene ID" value="ENSMUSG00000024507.7"/>
</dbReference>
<dbReference type="GeneID" id="15488"/>
<dbReference type="KEGG" id="mmu:15488"/>
<dbReference type="UCSC" id="uc008eww.2">
    <property type="organism name" value="mouse"/>
</dbReference>
<dbReference type="AGR" id="MGI:105089"/>
<dbReference type="CTD" id="3295"/>
<dbReference type="MGI" id="MGI:105089">
    <property type="gene designation" value="Hsd17b4"/>
</dbReference>
<dbReference type="VEuPathDB" id="HostDB:ENSMUSG00000024507"/>
<dbReference type="eggNOG" id="ENOG502QPX4">
    <property type="taxonomic scope" value="Eukaryota"/>
</dbReference>
<dbReference type="GeneTree" id="ENSGT00940000158343"/>
<dbReference type="HOGENOM" id="CLU_010194_18_4_1"/>
<dbReference type="InParanoid" id="P51660"/>
<dbReference type="OMA" id="GKTRWQR"/>
<dbReference type="OrthoDB" id="3592703at2759"/>
<dbReference type="PhylomeDB" id="P51660"/>
<dbReference type="TreeFam" id="TF105656"/>
<dbReference type="Reactome" id="R-MMU-193368">
    <property type="pathway name" value="Synthesis of bile acids and bile salts via 7alpha-hydroxycholesterol"/>
</dbReference>
<dbReference type="Reactome" id="R-MMU-2046106">
    <property type="pathway name" value="alpha-linolenic acid (ALA) metabolism"/>
</dbReference>
<dbReference type="Reactome" id="R-MMU-389887">
    <property type="pathway name" value="Beta-oxidation of pristanoyl-CoA"/>
</dbReference>
<dbReference type="Reactome" id="R-MMU-390247">
    <property type="pathway name" value="Beta-oxidation of very long chain fatty acids"/>
</dbReference>
<dbReference type="Reactome" id="R-MMU-9033241">
    <property type="pathway name" value="Peroxisomal protein import"/>
</dbReference>
<dbReference type="UniPathway" id="UPA00659"/>
<dbReference type="BioGRID-ORCS" id="15488">
    <property type="hits" value="3 hits in 80 CRISPR screens"/>
</dbReference>
<dbReference type="CD-CODE" id="CE726F99">
    <property type="entry name" value="Postsynaptic density"/>
</dbReference>
<dbReference type="ChiTaRS" id="Hsd17b4">
    <property type="organism name" value="mouse"/>
</dbReference>
<dbReference type="PRO" id="PR:P51660"/>
<dbReference type="Proteomes" id="UP000000589">
    <property type="component" value="Chromosome 18"/>
</dbReference>
<dbReference type="RNAct" id="P51660">
    <property type="molecule type" value="protein"/>
</dbReference>
<dbReference type="Bgee" id="ENSMUSG00000024507">
    <property type="expression patterns" value="Expressed in saccule of membranous labyrinth and 290 other cell types or tissues"/>
</dbReference>
<dbReference type="GO" id="GO:0005739">
    <property type="term" value="C:mitochondrion"/>
    <property type="evidence" value="ECO:0007005"/>
    <property type="project" value="MGI"/>
</dbReference>
<dbReference type="GO" id="GO:0005782">
    <property type="term" value="C:peroxisomal matrix"/>
    <property type="evidence" value="ECO:0000315"/>
    <property type="project" value="MGI"/>
</dbReference>
<dbReference type="GO" id="GO:0005777">
    <property type="term" value="C:peroxisome"/>
    <property type="evidence" value="ECO:0000314"/>
    <property type="project" value="MGI"/>
</dbReference>
<dbReference type="GO" id="GO:0106386">
    <property type="term" value="F:(3R)-hydroxyacyl-CoA dehydrogenase (NAD+) activity"/>
    <property type="evidence" value="ECO:0007669"/>
    <property type="project" value="RHEA"/>
</dbReference>
<dbReference type="GO" id="GO:0018812">
    <property type="term" value="F:3-hydroxyacyl-CoA dehydratase activity"/>
    <property type="evidence" value="ECO:0000315"/>
    <property type="project" value="MGI"/>
</dbReference>
<dbReference type="GO" id="GO:0003857">
    <property type="term" value="F:3-hydroxyacyl-CoA dehydrogenase activity"/>
    <property type="evidence" value="ECO:0000315"/>
    <property type="project" value="MGI"/>
</dbReference>
<dbReference type="GO" id="GO:0033989">
    <property type="term" value="F:3alpha,7alpha,12alpha-trihydroxy-5beta-cholest-24-enoyl-CoA hydratase activity"/>
    <property type="evidence" value="ECO:0007669"/>
    <property type="project" value="UniProtKB-EC"/>
</dbReference>
<dbReference type="GO" id="GO:0004300">
    <property type="term" value="F:enoyl-CoA hydratase activity"/>
    <property type="evidence" value="ECO:0000250"/>
    <property type="project" value="UniProtKB"/>
</dbReference>
<dbReference type="GO" id="GO:0004303">
    <property type="term" value="F:estradiol 17-beta-dehydrogenase [NAD(P)+] activity"/>
    <property type="evidence" value="ECO:0007669"/>
    <property type="project" value="Ensembl"/>
</dbReference>
<dbReference type="GO" id="GO:0016853">
    <property type="term" value="F:isomerase activity"/>
    <property type="evidence" value="ECO:0007669"/>
    <property type="project" value="UniProtKB-KW"/>
</dbReference>
<dbReference type="GO" id="GO:0042803">
    <property type="term" value="F:protein homodimerization activity"/>
    <property type="evidence" value="ECO:0007669"/>
    <property type="project" value="Ensembl"/>
</dbReference>
<dbReference type="GO" id="GO:0036109">
    <property type="term" value="P:alpha-linolenic acid metabolic process"/>
    <property type="evidence" value="ECO:0000314"/>
    <property type="project" value="MGI"/>
</dbReference>
<dbReference type="GO" id="GO:0008209">
    <property type="term" value="P:androgen metabolic process"/>
    <property type="evidence" value="ECO:0007669"/>
    <property type="project" value="Ensembl"/>
</dbReference>
<dbReference type="GO" id="GO:0008210">
    <property type="term" value="P:estrogen metabolic process"/>
    <property type="evidence" value="ECO:0007669"/>
    <property type="project" value="Ensembl"/>
</dbReference>
<dbReference type="GO" id="GO:0006635">
    <property type="term" value="P:fatty acid beta-oxidation"/>
    <property type="evidence" value="ECO:0000315"/>
    <property type="project" value="MGI"/>
</dbReference>
<dbReference type="GO" id="GO:0033540">
    <property type="term" value="P:fatty acid beta-oxidation using acyl-CoA oxidase"/>
    <property type="evidence" value="ECO:0000315"/>
    <property type="project" value="MGI"/>
</dbReference>
<dbReference type="GO" id="GO:1901570">
    <property type="term" value="P:fatty acid derivative biosynthetic process"/>
    <property type="evidence" value="ECO:0000314"/>
    <property type="project" value="MGI"/>
</dbReference>
<dbReference type="GO" id="GO:0042759">
    <property type="term" value="P:long-chain fatty acid biosynthetic process"/>
    <property type="evidence" value="ECO:0000314"/>
    <property type="project" value="MGI"/>
</dbReference>
<dbReference type="GO" id="GO:0036112">
    <property type="term" value="P:medium-chain fatty-acyl-CoA metabolic process"/>
    <property type="evidence" value="ECO:0007669"/>
    <property type="project" value="Ensembl"/>
</dbReference>
<dbReference type="GO" id="GO:0060009">
    <property type="term" value="P:Sertoli cell development"/>
    <property type="evidence" value="ECO:0000315"/>
    <property type="project" value="MGI"/>
</dbReference>
<dbReference type="GO" id="GO:0006636">
    <property type="term" value="P:unsaturated fatty acid biosynthetic process"/>
    <property type="evidence" value="ECO:0000314"/>
    <property type="project" value="MGI"/>
</dbReference>
<dbReference type="GO" id="GO:0000038">
    <property type="term" value="P:very long-chain fatty acid metabolic process"/>
    <property type="evidence" value="ECO:0000315"/>
    <property type="project" value="MGI"/>
</dbReference>
<dbReference type="GO" id="GO:0036111">
    <property type="term" value="P:very long-chain fatty-acyl-CoA metabolic process"/>
    <property type="evidence" value="ECO:0007669"/>
    <property type="project" value="Ensembl"/>
</dbReference>
<dbReference type="CDD" id="cd03448">
    <property type="entry name" value="HDE_HSD"/>
    <property type="match status" value="1"/>
</dbReference>
<dbReference type="CDD" id="cd05353">
    <property type="entry name" value="hydroxyacyl-CoA-like_DH_SDR_c-like"/>
    <property type="match status" value="1"/>
</dbReference>
<dbReference type="FunFam" id="3.30.1050.10:FF:000004">
    <property type="entry name" value="Hydroxysteroid 17-beta dehydrogenase 4"/>
    <property type="match status" value="1"/>
</dbReference>
<dbReference type="FunFam" id="1.10.287.4290:FF:000001">
    <property type="entry name" value="Peroxisomal multifunctional enzyme type 2"/>
    <property type="match status" value="1"/>
</dbReference>
<dbReference type="FunFam" id="3.10.129.10:FF:000013">
    <property type="entry name" value="Peroxisomal multifunctional enzyme type 2"/>
    <property type="match status" value="1"/>
</dbReference>
<dbReference type="FunFam" id="3.10.129.10:FF:000019">
    <property type="entry name" value="peroxisomal multifunctional enzyme type 2"/>
    <property type="match status" value="1"/>
</dbReference>
<dbReference type="FunFam" id="3.40.50.720:FF:000185">
    <property type="entry name" value="peroxisomal multifunctional enzyme type 2"/>
    <property type="match status" value="1"/>
</dbReference>
<dbReference type="Gene3D" id="1.10.287.4290">
    <property type="match status" value="1"/>
</dbReference>
<dbReference type="Gene3D" id="3.10.129.10">
    <property type="entry name" value="Hotdog Thioesterase"/>
    <property type="match status" value="2"/>
</dbReference>
<dbReference type="Gene3D" id="3.40.50.720">
    <property type="entry name" value="NAD(P)-binding Rossmann-like Domain"/>
    <property type="match status" value="1"/>
</dbReference>
<dbReference type="Gene3D" id="3.30.1050.10">
    <property type="entry name" value="SCP2 sterol-binding domain"/>
    <property type="match status" value="1"/>
</dbReference>
<dbReference type="InterPro" id="IPR029069">
    <property type="entry name" value="HotDog_dom_sf"/>
</dbReference>
<dbReference type="InterPro" id="IPR002539">
    <property type="entry name" value="MaoC-like_dom"/>
</dbReference>
<dbReference type="InterPro" id="IPR054357">
    <property type="entry name" value="MFE-2_N"/>
</dbReference>
<dbReference type="InterPro" id="IPR036291">
    <property type="entry name" value="NAD(P)-bd_dom_sf"/>
</dbReference>
<dbReference type="InterPro" id="IPR051687">
    <property type="entry name" value="Peroxisomal_Beta-Oxidation"/>
</dbReference>
<dbReference type="InterPro" id="IPR020904">
    <property type="entry name" value="Sc_DH/Rdtase_CS"/>
</dbReference>
<dbReference type="InterPro" id="IPR003033">
    <property type="entry name" value="SCP2_sterol-bd_dom"/>
</dbReference>
<dbReference type="InterPro" id="IPR036527">
    <property type="entry name" value="SCP2_sterol-bd_dom_sf"/>
</dbReference>
<dbReference type="InterPro" id="IPR002347">
    <property type="entry name" value="SDR_fam"/>
</dbReference>
<dbReference type="PANTHER" id="PTHR45024">
    <property type="entry name" value="DEHYDROGENASES, SHORT CHAIN"/>
    <property type="match status" value="1"/>
</dbReference>
<dbReference type="PANTHER" id="PTHR45024:SF2">
    <property type="entry name" value="SCP2 DOMAIN-CONTAINING PROTEIN"/>
    <property type="match status" value="1"/>
</dbReference>
<dbReference type="Pfam" id="PF00106">
    <property type="entry name" value="adh_short"/>
    <property type="match status" value="1"/>
</dbReference>
<dbReference type="Pfam" id="PF01575">
    <property type="entry name" value="MaoC_dehydratas"/>
    <property type="match status" value="1"/>
</dbReference>
<dbReference type="Pfam" id="PF22622">
    <property type="entry name" value="MFE-2_hydrat-2_N"/>
    <property type="match status" value="1"/>
</dbReference>
<dbReference type="Pfam" id="PF02036">
    <property type="entry name" value="SCP2"/>
    <property type="match status" value="1"/>
</dbReference>
<dbReference type="PRINTS" id="PR00081">
    <property type="entry name" value="GDHRDH"/>
</dbReference>
<dbReference type="PRINTS" id="PR00080">
    <property type="entry name" value="SDRFAMILY"/>
</dbReference>
<dbReference type="SMART" id="SM00822">
    <property type="entry name" value="PKS_KR"/>
    <property type="match status" value="1"/>
</dbReference>
<dbReference type="SUPFAM" id="SSF51735">
    <property type="entry name" value="NAD(P)-binding Rossmann-fold domains"/>
    <property type="match status" value="1"/>
</dbReference>
<dbReference type="SUPFAM" id="SSF55718">
    <property type="entry name" value="SCP-like"/>
    <property type="match status" value="1"/>
</dbReference>
<dbReference type="SUPFAM" id="SSF54637">
    <property type="entry name" value="Thioesterase/thiol ester dehydrase-isomerase"/>
    <property type="match status" value="2"/>
</dbReference>
<dbReference type="PROSITE" id="PS00061">
    <property type="entry name" value="ADH_SHORT"/>
    <property type="match status" value="1"/>
</dbReference>
<organism>
    <name type="scientific">Mus musculus</name>
    <name type="common">Mouse</name>
    <dbReference type="NCBI Taxonomy" id="10090"/>
    <lineage>
        <taxon>Eukaryota</taxon>
        <taxon>Metazoa</taxon>
        <taxon>Chordata</taxon>
        <taxon>Craniata</taxon>
        <taxon>Vertebrata</taxon>
        <taxon>Euteleostomi</taxon>
        <taxon>Mammalia</taxon>
        <taxon>Eutheria</taxon>
        <taxon>Euarchontoglires</taxon>
        <taxon>Glires</taxon>
        <taxon>Rodentia</taxon>
        <taxon>Myomorpha</taxon>
        <taxon>Muroidea</taxon>
        <taxon>Muridae</taxon>
        <taxon>Murinae</taxon>
        <taxon>Mus</taxon>
        <taxon>Mus</taxon>
    </lineage>
</organism>
<accession>P51660</accession>
<accession>Q9DBM3</accession>
<keyword id="KW-0007">Acetylation</keyword>
<keyword id="KW-0276">Fatty acid metabolism</keyword>
<keyword id="KW-0413">Isomerase</keyword>
<keyword id="KW-0443">Lipid metabolism</keyword>
<keyword id="KW-0456">Lyase</keyword>
<keyword id="KW-0520">NAD</keyword>
<keyword id="KW-0560">Oxidoreductase</keyword>
<keyword id="KW-0576">Peroxisome</keyword>
<keyword id="KW-0597">Phosphoprotein</keyword>
<keyword id="KW-1185">Reference proteome</keyword>
<gene>
    <name evidence="9" type="primary">Hsd17b4</name>
    <name type="synonym">Edh17b4</name>
</gene>
<feature type="chain" id="PRO_0000054584" description="Peroxisomal multifunctional enzyme type 2">
    <location>
        <begin position="1"/>
        <end position="735"/>
    </location>
</feature>
<feature type="chain" id="PRO_0000400084" description="(3R)-hydroxyacyl-CoA dehydrogenase">
    <location>
        <begin position="1"/>
        <end position="311"/>
    </location>
</feature>
<feature type="chain" id="PRO_0000400085" description="Enoyl-CoA hydratase 2">
    <location>
        <begin position="312"/>
        <end position="735"/>
    </location>
</feature>
<feature type="domain" description="MaoC-like">
    <location>
        <begin position="483"/>
        <end position="599"/>
    </location>
</feature>
<feature type="domain" description="SCP2">
    <location>
        <begin position="623"/>
        <end position="735"/>
    </location>
</feature>
<feature type="region of interest" description="(3R)-hydroxyacyl-CoA dehydrogenase">
    <location>
        <begin position="1"/>
        <end position="305"/>
    </location>
</feature>
<feature type="region of interest" description="Enoyl-CoA hydratase 2">
    <location>
        <begin position="321"/>
        <end position="621"/>
    </location>
</feature>
<feature type="short sequence motif" description="Microbody targeting signal" evidence="4">
    <location>
        <begin position="733"/>
        <end position="735"/>
    </location>
</feature>
<feature type="active site" description="Proton acceptor" evidence="5">
    <location>
        <position position="164"/>
    </location>
</feature>
<feature type="binding site" evidence="1">
    <location>
        <begin position="13"/>
        <end position="37"/>
    </location>
    <ligand>
        <name>NAD(+)</name>
        <dbReference type="ChEBI" id="CHEBI:57540"/>
    </ligand>
</feature>
<feature type="binding site" evidence="1">
    <location>
        <position position="21"/>
    </location>
    <ligand>
        <name>NAD(+)</name>
        <dbReference type="ChEBI" id="CHEBI:57540"/>
    </ligand>
</feature>
<feature type="binding site" evidence="1">
    <location>
        <position position="40"/>
    </location>
    <ligand>
        <name>NAD(+)</name>
        <dbReference type="ChEBI" id="CHEBI:57540"/>
    </ligand>
</feature>
<feature type="binding site" evidence="1">
    <location>
        <begin position="75"/>
        <end position="76"/>
    </location>
    <ligand>
        <name>NAD(+)</name>
        <dbReference type="ChEBI" id="CHEBI:57540"/>
    </ligand>
</feature>
<feature type="binding site" evidence="1">
    <location>
        <position position="99"/>
    </location>
    <ligand>
        <name>NAD(+)</name>
        <dbReference type="ChEBI" id="CHEBI:57540"/>
    </ligand>
</feature>
<feature type="binding site" evidence="1">
    <location>
        <position position="151"/>
    </location>
    <ligand>
        <name>substrate</name>
    </ligand>
</feature>
<feature type="binding site" evidence="1">
    <location>
        <begin position="164"/>
        <end position="168"/>
    </location>
    <ligand>
        <name>NAD(+)</name>
        <dbReference type="ChEBI" id="CHEBI:57540"/>
    </ligand>
</feature>
<feature type="binding site" evidence="1">
    <location>
        <begin position="196"/>
        <end position="199"/>
    </location>
    <ligand>
        <name>NAD(+)</name>
        <dbReference type="ChEBI" id="CHEBI:57540"/>
    </ligand>
</feature>
<feature type="binding site" evidence="1">
    <location>
        <begin position="405"/>
        <end position="406"/>
    </location>
    <ligand>
        <name>(3R)-3-hydroxydecanoyl-CoA</name>
        <dbReference type="ChEBI" id="CHEBI:74272"/>
    </ligand>
</feature>
<feature type="binding site" evidence="1">
    <location>
        <position position="434"/>
    </location>
    <ligand>
        <name>(3R)-3-hydroxydecanoyl-CoA</name>
        <dbReference type="ChEBI" id="CHEBI:74272"/>
    </ligand>
</feature>
<feature type="binding site" evidence="1">
    <location>
        <begin position="509"/>
        <end position="514"/>
    </location>
    <ligand>
        <name>(3R)-3-hydroxydecanoyl-CoA</name>
        <dbReference type="ChEBI" id="CHEBI:74272"/>
    </ligand>
</feature>
<feature type="binding site" evidence="1">
    <location>
        <position position="532"/>
    </location>
    <ligand>
        <name>(3R)-3-hydroxydecanoyl-CoA</name>
        <dbReference type="ChEBI" id="CHEBI:74272"/>
    </ligand>
</feature>
<feature type="binding site" evidence="1">
    <location>
        <position position="562"/>
    </location>
    <ligand>
        <name>(3R)-3-hydroxydecanoyl-CoA</name>
        <dbReference type="ChEBI" id="CHEBI:74272"/>
    </ligand>
</feature>
<feature type="binding site" evidence="1">
    <location>
        <position position="705"/>
    </location>
    <ligand>
        <name>substrate</name>
    </ligand>
</feature>
<feature type="binding site" evidence="1">
    <location>
        <position position="723"/>
    </location>
    <ligand>
        <name>substrate</name>
    </ligand>
</feature>
<feature type="modified residue" description="N6-acetyllysine; alternate" evidence="11">
    <location>
        <position position="46"/>
    </location>
</feature>
<feature type="modified residue" description="N6-succinyllysine; alternate" evidence="12">
    <location>
        <position position="46"/>
    </location>
</feature>
<feature type="modified residue" description="Phosphoserine" evidence="2">
    <location>
        <position position="52"/>
    </location>
</feature>
<feature type="modified residue" description="N6-succinyllysine" evidence="12">
    <location>
        <position position="57"/>
    </location>
</feature>
<feature type="modified residue" description="N6-succinyllysine" evidence="12">
    <location>
        <position position="68"/>
    </location>
</feature>
<feature type="modified residue" description="N6-succinyllysine" evidence="12">
    <location>
        <position position="84"/>
    </location>
</feature>
<feature type="modified residue" description="Phosphothreonine" evidence="2">
    <location>
        <position position="265"/>
    </location>
</feature>
<feature type="modified residue" description="N6-succinyllysine" evidence="12">
    <location>
        <position position="275"/>
    </location>
</feature>
<feature type="modified residue" description="Phosphoserine" evidence="2">
    <location>
        <position position="304"/>
    </location>
</feature>
<feature type="modified residue" description="Phosphoserine" evidence="10">
    <location>
        <position position="308"/>
    </location>
</feature>
<feature type="modified residue" description="N6-succinyllysine" evidence="12">
    <location>
        <position position="355"/>
    </location>
</feature>
<feature type="modified residue" description="N6-succinyllysine" evidence="12">
    <location>
        <position position="423"/>
    </location>
</feature>
<feature type="modified residue" description="N6-acetyllysine" evidence="11">
    <location>
        <position position="564"/>
    </location>
</feature>
<feature type="modified residue" description="N6-succinyllysine" evidence="12">
    <location>
        <position position="578"/>
    </location>
</feature>
<feature type="modified residue" description="N6-succinyllysine" evidence="12">
    <location>
        <position position="662"/>
    </location>
</feature>
<feature type="modified residue" description="N6-acetyllysine" evidence="2">
    <location>
        <position position="668"/>
    </location>
</feature>
<feature type="modified residue" description="N6-acetyllysine" evidence="11">
    <location>
        <position position="706"/>
    </location>
</feature>
<feature type="modified residue" description="N6-succinyllysine" evidence="12">
    <location>
        <position position="724"/>
    </location>
</feature>
<feature type="sequence conflict" description="In Ref. 1; CAA62015." evidence="8" ref="1">
    <original>A</original>
    <variation>P</variation>
    <location>
        <position position="17"/>
    </location>
</feature>
<feature type="sequence conflict" description="In Ref. 1; CAA62015." evidence="8" ref="1">
    <original>P</original>
    <variation>L</variation>
    <location>
        <position position="417"/>
    </location>
</feature>
<name>DHB4_MOUSE</name>
<reference key="1">
    <citation type="journal article" date="1995" name="J. Steroid Biochem. Mol. Biol.">
        <title>Molecular characterization of mouse 17 beta-hydroxysteroid dehydrogenase IV.</title>
        <authorList>
            <person name="Normand T."/>
            <person name="Husen B."/>
            <person name="Leenders F."/>
            <person name="Pelczar H."/>
            <person name="Baert J.-L."/>
            <person name="Begue A."/>
            <person name="Flourens A.C."/>
            <person name="Adamski J."/>
            <person name="de Launoit Y."/>
        </authorList>
    </citation>
    <scope>NUCLEOTIDE SEQUENCE [MRNA]</scope>
</reference>
<reference key="2">
    <citation type="journal article" date="2005" name="Science">
        <title>The transcriptional landscape of the mammalian genome.</title>
        <authorList>
            <person name="Carninci P."/>
            <person name="Kasukawa T."/>
            <person name="Katayama S."/>
            <person name="Gough J."/>
            <person name="Frith M.C."/>
            <person name="Maeda N."/>
            <person name="Oyama R."/>
            <person name="Ravasi T."/>
            <person name="Lenhard B."/>
            <person name="Wells C."/>
            <person name="Kodzius R."/>
            <person name="Shimokawa K."/>
            <person name="Bajic V.B."/>
            <person name="Brenner S.E."/>
            <person name="Batalov S."/>
            <person name="Forrest A.R."/>
            <person name="Zavolan M."/>
            <person name="Davis M.J."/>
            <person name="Wilming L.G."/>
            <person name="Aidinis V."/>
            <person name="Allen J.E."/>
            <person name="Ambesi-Impiombato A."/>
            <person name="Apweiler R."/>
            <person name="Aturaliya R.N."/>
            <person name="Bailey T.L."/>
            <person name="Bansal M."/>
            <person name="Baxter L."/>
            <person name="Beisel K.W."/>
            <person name="Bersano T."/>
            <person name="Bono H."/>
            <person name="Chalk A.M."/>
            <person name="Chiu K.P."/>
            <person name="Choudhary V."/>
            <person name="Christoffels A."/>
            <person name="Clutterbuck D.R."/>
            <person name="Crowe M.L."/>
            <person name="Dalla E."/>
            <person name="Dalrymple B.P."/>
            <person name="de Bono B."/>
            <person name="Della Gatta G."/>
            <person name="di Bernardo D."/>
            <person name="Down T."/>
            <person name="Engstrom P."/>
            <person name="Fagiolini M."/>
            <person name="Faulkner G."/>
            <person name="Fletcher C.F."/>
            <person name="Fukushima T."/>
            <person name="Furuno M."/>
            <person name="Futaki S."/>
            <person name="Gariboldi M."/>
            <person name="Georgii-Hemming P."/>
            <person name="Gingeras T.R."/>
            <person name="Gojobori T."/>
            <person name="Green R.E."/>
            <person name="Gustincich S."/>
            <person name="Harbers M."/>
            <person name="Hayashi Y."/>
            <person name="Hensch T.K."/>
            <person name="Hirokawa N."/>
            <person name="Hill D."/>
            <person name="Huminiecki L."/>
            <person name="Iacono M."/>
            <person name="Ikeo K."/>
            <person name="Iwama A."/>
            <person name="Ishikawa T."/>
            <person name="Jakt M."/>
            <person name="Kanapin A."/>
            <person name="Katoh M."/>
            <person name="Kawasawa Y."/>
            <person name="Kelso J."/>
            <person name="Kitamura H."/>
            <person name="Kitano H."/>
            <person name="Kollias G."/>
            <person name="Krishnan S.P."/>
            <person name="Kruger A."/>
            <person name="Kummerfeld S.K."/>
            <person name="Kurochkin I.V."/>
            <person name="Lareau L.F."/>
            <person name="Lazarevic D."/>
            <person name="Lipovich L."/>
            <person name="Liu J."/>
            <person name="Liuni S."/>
            <person name="McWilliam S."/>
            <person name="Madan Babu M."/>
            <person name="Madera M."/>
            <person name="Marchionni L."/>
            <person name="Matsuda H."/>
            <person name="Matsuzawa S."/>
            <person name="Miki H."/>
            <person name="Mignone F."/>
            <person name="Miyake S."/>
            <person name="Morris K."/>
            <person name="Mottagui-Tabar S."/>
            <person name="Mulder N."/>
            <person name="Nakano N."/>
            <person name="Nakauchi H."/>
            <person name="Ng P."/>
            <person name="Nilsson R."/>
            <person name="Nishiguchi S."/>
            <person name="Nishikawa S."/>
            <person name="Nori F."/>
            <person name="Ohara O."/>
            <person name="Okazaki Y."/>
            <person name="Orlando V."/>
            <person name="Pang K.C."/>
            <person name="Pavan W.J."/>
            <person name="Pavesi G."/>
            <person name="Pesole G."/>
            <person name="Petrovsky N."/>
            <person name="Piazza S."/>
            <person name="Reed J."/>
            <person name="Reid J.F."/>
            <person name="Ring B.Z."/>
            <person name="Ringwald M."/>
            <person name="Rost B."/>
            <person name="Ruan Y."/>
            <person name="Salzberg S.L."/>
            <person name="Sandelin A."/>
            <person name="Schneider C."/>
            <person name="Schoenbach C."/>
            <person name="Sekiguchi K."/>
            <person name="Semple C.A."/>
            <person name="Seno S."/>
            <person name="Sessa L."/>
            <person name="Sheng Y."/>
            <person name="Shibata Y."/>
            <person name="Shimada H."/>
            <person name="Shimada K."/>
            <person name="Silva D."/>
            <person name="Sinclair B."/>
            <person name="Sperling S."/>
            <person name="Stupka E."/>
            <person name="Sugiura K."/>
            <person name="Sultana R."/>
            <person name="Takenaka Y."/>
            <person name="Taki K."/>
            <person name="Tammoja K."/>
            <person name="Tan S.L."/>
            <person name="Tang S."/>
            <person name="Taylor M.S."/>
            <person name="Tegner J."/>
            <person name="Teichmann S.A."/>
            <person name="Ueda H.R."/>
            <person name="van Nimwegen E."/>
            <person name="Verardo R."/>
            <person name="Wei C.L."/>
            <person name="Yagi K."/>
            <person name="Yamanishi H."/>
            <person name="Zabarovsky E."/>
            <person name="Zhu S."/>
            <person name="Zimmer A."/>
            <person name="Hide W."/>
            <person name="Bult C."/>
            <person name="Grimmond S.M."/>
            <person name="Teasdale R.D."/>
            <person name="Liu E.T."/>
            <person name="Brusic V."/>
            <person name="Quackenbush J."/>
            <person name="Wahlestedt C."/>
            <person name="Mattick J.S."/>
            <person name="Hume D.A."/>
            <person name="Kai C."/>
            <person name="Sasaki D."/>
            <person name="Tomaru Y."/>
            <person name="Fukuda S."/>
            <person name="Kanamori-Katayama M."/>
            <person name="Suzuki M."/>
            <person name="Aoki J."/>
            <person name="Arakawa T."/>
            <person name="Iida J."/>
            <person name="Imamura K."/>
            <person name="Itoh M."/>
            <person name="Kato T."/>
            <person name="Kawaji H."/>
            <person name="Kawagashira N."/>
            <person name="Kawashima T."/>
            <person name="Kojima M."/>
            <person name="Kondo S."/>
            <person name="Konno H."/>
            <person name="Nakano K."/>
            <person name="Ninomiya N."/>
            <person name="Nishio T."/>
            <person name="Okada M."/>
            <person name="Plessy C."/>
            <person name="Shibata K."/>
            <person name="Shiraki T."/>
            <person name="Suzuki S."/>
            <person name="Tagami M."/>
            <person name="Waki K."/>
            <person name="Watahiki A."/>
            <person name="Okamura-Oho Y."/>
            <person name="Suzuki H."/>
            <person name="Kawai J."/>
            <person name="Hayashizaki Y."/>
        </authorList>
    </citation>
    <scope>NUCLEOTIDE SEQUENCE [LARGE SCALE MRNA]</scope>
    <source>
        <strain>C57BL/6J</strain>
        <strain>NOD</strain>
        <tissue>Amnion</tissue>
        <tissue>Liver</tissue>
        <tissue>Thymus</tissue>
    </source>
</reference>
<reference key="3">
    <citation type="journal article" date="2004" name="Genome Res.">
        <title>The status, quality, and expansion of the NIH full-length cDNA project: the Mammalian Gene Collection (MGC).</title>
        <authorList>
            <consortium name="The MGC Project Team"/>
        </authorList>
    </citation>
    <scope>NUCLEOTIDE SEQUENCE [LARGE SCALE MRNA]</scope>
    <source>
        <strain>FVB/N</strain>
        <tissue>Colon</tissue>
    </source>
</reference>
<reference key="4">
    <citation type="journal article" date="2007" name="Biochem. Biophys. Res. Commun.">
        <title>Beta-oxidation in hepatocyte cultures from mice with peroxisomal gene knockouts.</title>
        <authorList>
            <person name="Dirkx R."/>
            <person name="Meyhi E."/>
            <person name="Asselberghs S."/>
            <person name="Reddy J."/>
            <person name="Baes M."/>
            <person name="Van Veldhoven P.P."/>
        </authorList>
    </citation>
    <scope>FUNCTION</scope>
    <scope>CATALYTIC ACTIVITY</scope>
</reference>
<reference key="5">
    <citation type="journal article" date="2007" name="Proc. Natl. Acad. Sci. U.S.A.">
        <title>Large-scale phosphorylation analysis of mouse liver.</title>
        <authorList>
            <person name="Villen J."/>
            <person name="Beausoleil S.A."/>
            <person name="Gerber S.A."/>
            <person name="Gygi S.P."/>
        </authorList>
    </citation>
    <scope>PHOSPHORYLATION [LARGE SCALE ANALYSIS] AT SER-308</scope>
    <scope>IDENTIFICATION BY MASS SPECTROMETRY [LARGE SCALE ANALYSIS]</scope>
    <source>
        <tissue>Liver</tissue>
    </source>
</reference>
<reference key="6">
    <citation type="journal article" date="2010" name="Cell">
        <title>A tissue-specific atlas of mouse protein phosphorylation and expression.</title>
        <authorList>
            <person name="Huttlin E.L."/>
            <person name="Jedrychowski M.P."/>
            <person name="Elias J.E."/>
            <person name="Goswami T."/>
            <person name="Rad R."/>
            <person name="Beausoleil S.A."/>
            <person name="Villen J."/>
            <person name="Haas W."/>
            <person name="Sowa M.E."/>
            <person name="Gygi S.P."/>
        </authorList>
    </citation>
    <scope>IDENTIFICATION BY MASS SPECTROMETRY [LARGE SCALE ANALYSIS]</scope>
    <source>
        <tissue>Brain</tissue>
        <tissue>Brown adipose tissue</tissue>
        <tissue>Heart</tissue>
        <tissue>Kidney</tissue>
        <tissue>Liver</tissue>
        <tissue>Lung</tissue>
        <tissue>Pancreas</tissue>
        <tissue>Spleen</tissue>
        <tissue>Testis</tissue>
    </source>
</reference>
<reference key="7">
    <citation type="journal article" date="2013" name="Mol. Cell">
        <title>SIRT5-mediated lysine desuccinylation impacts diverse metabolic pathways.</title>
        <authorList>
            <person name="Park J."/>
            <person name="Chen Y."/>
            <person name="Tishkoff D.X."/>
            <person name="Peng C."/>
            <person name="Tan M."/>
            <person name="Dai L."/>
            <person name="Xie Z."/>
            <person name="Zhang Y."/>
            <person name="Zwaans B.M."/>
            <person name="Skinner M.E."/>
            <person name="Lombard D.B."/>
            <person name="Zhao Y."/>
        </authorList>
    </citation>
    <scope>SUCCINYLATION [LARGE SCALE ANALYSIS] AT LYS-46; LYS-57; LYS-68; LYS-84; LYS-275; LYS-355; LYS-423; LYS-578; LYS-662 AND LYS-724</scope>
    <scope>IDENTIFICATION BY MASS SPECTROMETRY [LARGE SCALE ANALYSIS]</scope>
    <source>
        <tissue>Liver</tissue>
    </source>
</reference>
<reference key="8">
    <citation type="journal article" date="2013" name="Proc. Natl. Acad. Sci. U.S.A.">
        <title>Label-free quantitative proteomics of the lysine acetylome in mitochondria identifies substrates of SIRT3 in metabolic pathways.</title>
        <authorList>
            <person name="Rardin M.J."/>
            <person name="Newman J.C."/>
            <person name="Held J.M."/>
            <person name="Cusack M.P."/>
            <person name="Sorensen D.J."/>
            <person name="Li B."/>
            <person name="Schilling B."/>
            <person name="Mooney S.D."/>
            <person name="Kahn C.R."/>
            <person name="Verdin E."/>
            <person name="Gibson B.W."/>
        </authorList>
    </citation>
    <scope>ACETYLATION [LARGE SCALE ANALYSIS] AT LYS-46; LYS-564 AND LYS-706</scope>
    <scope>IDENTIFICATION BY MASS SPECTROMETRY [LARGE SCALE ANALYSIS]</scope>
    <source>
        <tissue>Liver</tissue>
    </source>
</reference>